<dbReference type="EMBL" id="AY542165">
    <property type="protein sequence ID" value="AAS22247.1"/>
    <property type="molecule type" value="mRNA"/>
</dbReference>
<dbReference type="EMBL" id="AF078857">
    <property type="protein sequence ID" value="AAD44489.1"/>
    <property type="molecule type" value="mRNA"/>
</dbReference>
<dbReference type="EMBL" id="AF161423">
    <property type="protein sequence ID" value="AAF28983.1"/>
    <property type="status" value="ALT_INIT"/>
    <property type="molecule type" value="mRNA"/>
</dbReference>
<dbReference type="EMBL" id="AK002147">
    <property type="protein sequence ID" value="BAA92108.1"/>
    <property type="molecule type" value="mRNA"/>
</dbReference>
<dbReference type="EMBL" id="CH471086">
    <property type="protein sequence ID" value="EAW48941.1"/>
    <property type="molecule type" value="Genomic_DNA"/>
</dbReference>
<dbReference type="EMBL" id="CH471086">
    <property type="protein sequence ID" value="EAW48942.1"/>
    <property type="molecule type" value="Genomic_DNA"/>
</dbReference>
<dbReference type="EMBL" id="BC005179">
    <property type="protein sequence ID" value="AAH05179.1"/>
    <property type="molecule type" value="mRNA"/>
</dbReference>
<dbReference type="CCDS" id="CCDS34215.1"/>
<dbReference type="RefSeq" id="NP_001295009.1">
    <property type="nucleotide sequence ID" value="NM_001308080.1"/>
</dbReference>
<dbReference type="RefSeq" id="NP_057228.1">
    <property type="nucleotide sequence ID" value="NM_016144.4"/>
</dbReference>
<dbReference type="PDB" id="8ESD">
    <property type="method" value="X-ray"/>
    <property type="resolution" value="3.33 A"/>
    <property type="chains" value="T=12-202"/>
</dbReference>
<dbReference type="PDB" id="8F2R">
    <property type="method" value="EM"/>
    <property type="resolution" value="3.12 A"/>
    <property type="chains" value="J=5-202"/>
</dbReference>
<dbReference type="PDB" id="8F2U">
    <property type="method" value="EM"/>
    <property type="resolution" value="3.53 A"/>
    <property type="chains" value="J=1-202"/>
</dbReference>
<dbReference type="PDB" id="8P0W">
    <property type="method" value="EM"/>
    <property type="resolution" value="2.90 A"/>
    <property type="chains" value="J=1-202"/>
</dbReference>
<dbReference type="PDBsum" id="8ESD"/>
<dbReference type="PDBsum" id="8F2R"/>
<dbReference type="PDBsum" id="8F2U"/>
<dbReference type="PDBsum" id="8P0W"/>
<dbReference type="EMDB" id="EMD-17340"/>
<dbReference type="EMDB" id="EMD-17342"/>
<dbReference type="EMDB" id="EMD-28825"/>
<dbReference type="EMDB" id="EMD-28827"/>
<dbReference type="SMR" id="Q9Y6G5"/>
<dbReference type="BioGRID" id="119521">
    <property type="interactions" value="46"/>
</dbReference>
<dbReference type="ComplexPortal" id="CPX-2211">
    <property type="entry name" value="Commander complex"/>
</dbReference>
<dbReference type="CORUM" id="Q9Y6G5"/>
<dbReference type="FunCoup" id="Q9Y6G5">
    <property type="interactions" value="1798"/>
</dbReference>
<dbReference type="IntAct" id="Q9Y6G5">
    <property type="interactions" value="46"/>
</dbReference>
<dbReference type="MINT" id="Q9Y6G5"/>
<dbReference type="STRING" id="9606.ENSP00000274458"/>
<dbReference type="GlyGen" id="Q9Y6G5">
    <property type="glycosylation" value="1 site, 1 O-linked glycan (1 site)"/>
</dbReference>
<dbReference type="iPTMnet" id="Q9Y6G5"/>
<dbReference type="PhosphoSitePlus" id="Q9Y6G5"/>
<dbReference type="SwissPalm" id="Q9Y6G5"/>
<dbReference type="BioMuta" id="COMMD10"/>
<dbReference type="DMDM" id="51316122"/>
<dbReference type="jPOST" id="Q9Y6G5"/>
<dbReference type="MassIVE" id="Q9Y6G5"/>
<dbReference type="PaxDb" id="9606-ENSP00000274458"/>
<dbReference type="PeptideAtlas" id="Q9Y6G5"/>
<dbReference type="ProteomicsDB" id="86676"/>
<dbReference type="Pumba" id="Q9Y6G5"/>
<dbReference type="Antibodypedia" id="25475">
    <property type="antibodies" value="140 antibodies from 18 providers"/>
</dbReference>
<dbReference type="DNASU" id="51397"/>
<dbReference type="Ensembl" id="ENST00000274458.9">
    <property type="protein sequence ID" value="ENSP00000274458.4"/>
    <property type="gene ID" value="ENSG00000145781.9"/>
</dbReference>
<dbReference type="GeneID" id="51397"/>
<dbReference type="KEGG" id="hsa:51397"/>
<dbReference type="MANE-Select" id="ENST00000274458.9">
    <property type="protein sequence ID" value="ENSP00000274458.4"/>
    <property type="RefSeq nucleotide sequence ID" value="NM_016144.4"/>
    <property type="RefSeq protein sequence ID" value="NP_057228.1"/>
</dbReference>
<dbReference type="UCSC" id="uc003krt.2">
    <property type="organism name" value="human"/>
</dbReference>
<dbReference type="AGR" id="HGNC:30201"/>
<dbReference type="CTD" id="51397"/>
<dbReference type="DisGeNET" id="51397"/>
<dbReference type="GeneCards" id="COMMD10"/>
<dbReference type="HGNC" id="HGNC:30201">
    <property type="gene designation" value="COMMD10"/>
</dbReference>
<dbReference type="HPA" id="ENSG00000145781">
    <property type="expression patterns" value="Low tissue specificity"/>
</dbReference>
<dbReference type="MIM" id="616704">
    <property type="type" value="gene"/>
</dbReference>
<dbReference type="neXtProt" id="NX_Q9Y6G5"/>
<dbReference type="OpenTargets" id="ENSG00000145781"/>
<dbReference type="PharmGKB" id="PA134862606"/>
<dbReference type="VEuPathDB" id="HostDB:ENSG00000145781"/>
<dbReference type="eggNOG" id="ENOG502QWQ2">
    <property type="taxonomic scope" value="Eukaryota"/>
</dbReference>
<dbReference type="GeneTree" id="ENSGT00390000001500"/>
<dbReference type="InParanoid" id="Q9Y6G5"/>
<dbReference type="OMA" id="FVEFNHK"/>
<dbReference type="OrthoDB" id="77522at2759"/>
<dbReference type="PAN-GO" id="Q9Y6G5">
    <property type="GO annotations" value="0 GO annotations based on evolutionary models"/>
</dbReference>
<dbReference type="PhylomeDB" id="Q9Y6G5"/>
<dbReference type="TreeFam" id="TF352584"/>
<dbReference type="PathwayCommons" id="Q9Y6G5"/>
<dbReference type="Reactome" id="R-HSA-8951664">
    <property type="pathway name" value="Neddylation"/>
</dbReference>
<dbReference type="SignaLink" id="Q9Y6G5"/>
<dbReference type="BioGRID-ORCS" id="51397">
    <property type="hits" value="26 hits in 1174 CRISPR screens"/>
</dbReference>
<dbReference type="ChiTaRS" id="COMMD10">
    <property type="organism name" value="human"/>
</dbReference>
<dbReference type="GenomeRNAi" id="51397"/>
<dbReference type="Pharos" id="Q9Y6G5">
    <property type="development level" value="Tbio"/>
</dbReference>
<dbReference type="PRO" id="PR:Q9Y6G5"/>
<dbReference type="Proteomes" id="UP000005640">
    <property type="component" value="Chromosome 5"/>
</dbReference>
<dbReference type="RNAct" id="Q9Y6G5">
    <property type="molecule type" value="protein"/>
</dbReference>
<dbReference type="Bgee" id="ENSG00000145781">
    <property type="expression patterns" value="Expressed in oocyte and 189 other cell types or tissues"/>
</dbReference>
<dbReference type="ExpressionAtlas" id="Q9Y6G5">
    <property type="expression patterns" value="baseline and differential"/>
</dbReference>
<dbReference type="GO" id="GO:0005737">
    <property type="term" value="C:cytoplasm"/>
    <property type="evidence" value="ECO:0007669"/>
    <property type="project" value="UniProtKB-SubCell"/>
</dbReference>
<dbReference type="GO" id="GO:0005654">
    <property type="term" value="C:nucleoplasm"/>
    <property type="evidence" value="ECO:0000314"/>
    <property type="project" value="HPA"/>
</dbReference>
<dbReference type="CDD" id="cd04758">
    <property type="entry name" value="Commd10"/>
    <property type="match status" value="1"/>
</dbReference>
<dbReference type="InterPro" id="IPR017920">
    <property type="entry name" value="COMM"/>
</dbReference>
<dbReference type="InterPro" id="IPR037361">
    <property type="entry name" value="COMMD10"/>
</dbReference>
<dbReference type="PANTHER" id="PTHR12333">
    <property type="entry name" value="COMM DOMAIN CONTAINING PROTEIN 10"/>
    <property type="match status" value="1"/>
</dbReference>
<dbReference type="PANTHER" id="PTHR12333:SF0">
    <property type="entry name" value="COMM DOMAIN-CONTAINING PROTEIN 10"/>
    <property type="match status" value="1"/>
</dbReference>
<dbReference type="Pfam" id="PF07258">
    <property type="entry name" value="COMM_domain"/>
    <property type="match status" value="1"/>
</dbReference>
<dbReference type="Pfam" id="PF21672">
    <property type="entry name" value="COMM_HN"/>
    <property type="match status" value="1"/>
</dbReference>
<dbReference type="PROSITE" id="PS51269">
    <property type="entry name" value="COMM"/>
    <property type="match status" value="1"/>
</dbReference>
<comment type="function">
    <text evidence="2 7 8 10">Scaffold protein in the commander complex that is essential for endosomal recycling of transmembrane cargos; the commander complex is composed of the CCC subcomplex and the retriever subcomplex (PubMed:37172566, PubMed:38459129). May modulate activity of cullin-RING E3 ubiquitin ligase (CRL) complexes (PubMed:21778237). May down-regulate activation of NF-kappa-B (PubMed:15799966).</text>
</comment>
<comment type="subunit">
    <text evidence="2 3 4 5 6 7 8">Component of the commander complex consisting of the CCC subcomplex and the retriever subcomplex (PubMed:37172566, PubMed:38459129, PubMed:38459129, PubMed:25355947, PubMed:15799966). Component of the CCC (COMMD/CCDC22/CCDC93) subcomplex consisting of COMMD1, COMMD2, COMMD3, COMMD4, COMMD5, COMMD6, COMMD7, COMMD8, COMMD9, COMMD10, CCDC22 and CCDC93; within the complex forms a heterodimer with COMMD5 (PubMed:37172566, PubMed:38459129, PubMed:15799966, PubMed:23563313, PubMed:25355947). Interacts with RELA, RELB, NFKB1/p105, NFKB2/p100 (PubMed:15799966). Interacts with CCDC22, CCDC93, SCNN1B, CUL1, CUL2, CUL3, CUL4A, CUL4B, CUL7 (PubMed:21778237, PubMed:23563313, PubMed:23637203, PubMed:25355947).</text>
</comment>
<comment type="interaction">
    <interactant intactId="EBI-1550310">
        <id>Q9Y6G5</id>
    </interactant>
    <interactant intactId="EBI-3943153">
        <id>O60826</id>
        <label>CCDC22</label>
    </interactant>
    <organismsDiffer>false</organismsDiffer>
    <experiments>15</experiments>
</comment>
<comment type="interaction">
    <interactant intactId="EBI-1550310">
        <id>Q9Y6G5</id>
    </interactant>
    <interactant intactId="EBI-1104769">
        <id>Q567U6</id>
        <label>CCDC93</label>
    </interactant>
    <organismsDiffer>false</organismsDiffer>
    <experiments>7</experiments>
</comment>
<comment type="interaction">
    <interactant intactId="EBI-1550310">
        <id>Q9Y6G5</id>
    </interactant>
    <interactant intactId="EBI-1550112">
        <id>Q8N668</id>
        <label>COMMD1</label>
    </interactant>
    <organismsDiffer>false</organismsDiffer>
    <experiments>7</experiments>
</comment>
<comment type="interaction">
    <interactant intactId="EBI-1550310">
        <id>Q9Y6G5</id>
    </interactant>
    <interactant intactId="EBI-1550256">
        <id>Q9GZQ3</id>
        <label>COMMD5</label>
    </interactant>
    <organismsDiffer>false</organismsDiffer>
    <experiments>13</experiments>
</comment>
<comment type="interaction">
    <interactant intactId="EBI-1550310">
        <id>Q9Y6G5</id>
    </interactant>
    <interactant intactId="EBI-10226858">
        <id>Q0VDC6</id>
        <label>FKBP1A</label>
    </interactant>
    <organismsDiffer>false</organismsDiffer>
    <experiments>3</experiments>
</comment>
<comment type="interaction">
    <interactant intactId="EBI-1550310">
        <id>Q9Y6G5</id>
    </interactant>
    <interactant intactId="EBI-852851">
        <id>P01100</id>
        <label>FOS</label>
    </interactant>
    <organismsDiffer>false</organismsDiffer>
    <experiments>3</experiments>
</comment>
<comment type="interaction">
    <interactant intactId="EBI-1550310">
        <id>Q9Y6G5</id>
    </interactant>
    <interactant intactId="EBI-2552594">
        <id>P50440</id>
        <label>GATM</label>
    </interactant>
    <organismsDiffer>false</organismsDiffer>
    <experiments>3</experiments>
</comment>
<comment type="interaction">
    <interactant intactId="EBI-1550310">
        <id>Q9Y6G5</id>
    </interactant>
    <interactant intactId="EBI-1052596">
        <id>P31930</id>
        <label>UQCRC1</label>
    </interactant>
    <organismsDiffer>false</organismsDiffer>
    <experiments>3</experiments>
</comment>
<comment type="subcellular location">
    <subcellularLocation>
        <location evidence="3">Cytoplasm</location>
    </subcellularLocation>
    <subcellularLocation>
        <location evidence="3">Nucleus</location>
    </subcellularLocation>
</comment>
<comment type="tissue specificity">
    <text evidence="2">Ubiquitous.</text>
</comment>
<comment type="similarity">
    <text evidence="9">Belongs to the COMM domain-containing protein 10 family.</text>
</comment>
<comment type="sequence caution" evidence="9">
    <conflict type="erroneous initiation">
        <sequence resource="EMBL-CDS" id="AAF28983"/>
    </conflict>
</comment>
<accession>Q9Y6G5</accession>
<accession>D3DT07</accession>
<accession>Q9P077</accession>
<evidence type="ECO:0000255" key="1">
    <source>
        <dbReference type="PROSITE-ProRule" id="PRU00602"/>
    </source>
</evidence>
<evidence type="ECO:0000269" key="2">
    <source>
    </source>
</evidence>
<evidence type="ECO:0000269" key="3">
    <source>
    </source>
</evidence>
<evidence type="ECO:0000269" key="4">
    <source>
    </source>
</evidence>
<evidence type="ECO:0000269" key="5">
    <source>
    </source>
</evidence>
<evidence type="ECO:0000269" key="6">
    <source>
    </source>
</evidence>
<evidence type="ECO:0000269" key="7">
    <source>
    </source>
</evidence>
<evidence type="ECO:0000269" key="8">
    <source>
    </source>
</evidence>
<evidence type="ECO:0000305" key="9"/>
<evidence type="ECO:0000305" key="10">
    <source>
    </source>
</evidence>
<evidence type="ECO:0007744" key="11">
    <source>
        <dbReference type="PDB" id="8ESD"/>
    </source>
</evidence>
<evidence type="ECO:0007744" key="12">
    <source>
        <dbReference type="PDB" id="8F2R"/>
    </source>
</evidence>
<evidence type="ECO:0007744" key="13">
    <source>
        <dbReference type="PDB" id="8F2U"/>
    </source>
</evidence>
<evidence type="ECO:0007744" key="14">
    <source>
        <dbReference type="PDB" id="8P0W"/>
    </source>
</evidence>
<evidence type="ECO:0007744" key="15">
    <source>
    </source>
</evidence>
<evidence type="ECO:0007744" key="16">
    <source>
    </source>
</evidence>
<evidence type="ECO:0007744" key="17">
    <source>
    </source>
</evidence>
<evidence type="ECO:0007744" key="18">
    <source>
    </source>
</evidence>
<evidence type="ECO:0007829" key="19">
    <source>
        <dbReference type="PDB" id="8P0W"/>
    </source>
</evidence>
<reference key="1">
    <citation type="journal article" date="2005" name="J. Biol. Chem.">
        <title>COMMD proteins, a novel family of structural and functional homologs of MURR1.</title>
        <authorList>
            <person name="Burstein E."/>
            <person name="Hoberg J.E."/>
            <person name="Wilkinson A.S."/>
            <person name="Rumble J.M."/>
            <person name="Csomos R.A."/>
            <person name="Komarck C.M."/>
            <person name="Maine G.N."/>
            <person name="Wilkinson J.C."/>
            <person name="Mayo M.W."/>
            <person name="Duckett C.S."/>
        </authorList>
    </citation>
    <scope>NUCLEOTIDE SEQUENCE [MRNA]</scope>
    <scope>FUNCTION</scope>
    <scope>INTERACTION WITH COMMD1; RELA; RELB; NFKB1 AND NFKB2</scope>
    <scope>TISSUE SPECIFICITY</scope>
</reference>
<reference key="2">
    <citation type="submission" date="1998-07" db="EMBL/GenBank/DDBJ databases">
        <authorList>
            <person name="Fu G."/>
            <person name="Huang Q."/>
            <person name="Song H."/>
            <person name="Peng J."/>
            <person name="Zhang Q."/>
            <person name="Mao M."/>
            <person name="Dai M."/>
            <person name="Mao Y."/>
            <person name="Zhou J."/>
            <person name="Chen Z."/>
            <person name="Chen J."/>
        </authorList>
    </citation>
    <scope>NUCLEOTIDE SEQUENCE [LARGE SCALE MRNA]</scope>
    <source>
        <tissue>Pituitary tumor</tissue>
    </source>
</reference>
<reference key="3">
    <citation type="journal article" date="2000" name="Genome Res.">
        <title>Cloning and functional analysis of cDNAs with open reading frames for 300 previously undefined genes expressed in CD34+ hematopoietic stem/progenitor cells.</title>
        <authorList>
            <person name="Zhang Q.-H."/>
            <person name="Ye M."/>
            <person name="Wu X.-Y."/>
            <person name="Ren S.-X."/>
            <person name="Zhao M."/>
            <person name="Zhao C.-J."/>
            <person name="Fu G."/>
            <person name="Shen Y."/>
            <person name="Fan H.-Y."/>
            <person name="Lu G."/>
            <person name="Zhong M."/>
            <person name="Xu X.-R."/>
            <person name="Han Z.-G."/>
            <person name="Zhang J.-W."/>
            <person name="Tao J."/>
            <person name="Huang Q.-H."/>
            <person name="Zhou J."/>
            <person name="Hu G.-X."/>
            <person name="Gu J."/>
            <person name="Chen S.-J."/>
            <person name="Chen Z."/>
        </authorList>
    </citation>
    <scope>NUCLEOTIDE SEQUENCE [LARGE SCALE MRNA]</scope>
    <source>
        <tissue>Umbilical cord blood</tissue>
    </source>
</reference>
<reference key="4">
    <citation type="journal article" date="2004" name="Nat. Genet.">
        <title>Complete sequencing and characterization of 21,243 full-length human cDNAs.</title>
        <authorList>
            <person name="Ota T."/>
            <person name="Suzuki Y."/>
            <person name="Nishikawa T."/>
            <person name="Otsuki T."/>
            <person name="Sugiyama T."/>
            <person name="Irie R."/>
            <person name="Wakamatsu A."/>
            <person name="Hayashi K."/>
            <person name="Sato H."/>
            <person name="Nagai K."/>
            <person name="Kimura K."/>
            <person name="Makita H."/>
            <person name="Sekine M."/>
            <person name="Obayashi M."/>
            <person name="Nishi T."/>
            <person name="Shibahara T."/>
            <person name="Tanaka T."/>
            <person name="Ishii S."/>
            <person name="Yamamoto J."/>
            <person name="Saito K."/>
            <person name="Kawai Y."/>
            <person name="Isono Y."/>
            <person name="Nakamura Y."/>
            <person name="Nagahari K."/>
            <person name="Murakami K."/>
            <person name="Yasuda T."/>
            <person name="Iwayanagi T."/>
            <person name="Wagatsuma M."/>
            <person name="Shiratori A."/>
            <person name="Sudo H."/>
            <person name="Hosoiri T."/>
            <person name="Kaku Y."/>
            <person name="Kodaira H."/>
            <person name="Kondo H."/>
            <person name="Sugawara M."/>
            <person name="Takahashi M."/>
            <person name="Kanda K."/>
            <person name="Yokoi T."/>
            <person name="Furuya T."/>
            <person name="Kikkawa E."/>
            <person name="Omura Y."/>
            <person name="Abe K."/>
            <person name="Kamihara K."/>
            <person name="Katsuta N."/>
            <person name="Sato K."/>
            <person name="Tanikawa M."/>
            <person name="Yamazaki M."/>
            <person name="Ninomiya K."/>
            <person name="Ishibashi T."/>
            <person name="Yamashita H."/>
            <person name="Murakawa K."/>
            <person name="Fujimori K."/>
            <person name="Tanai H."/>
            <person name="Kimata M."/>
            <person name="Watanabe M."/>
            <person name="Hiraoka S."/>
            <person name="Chiba Y."/>
            <person name="Ishida S."/>
            <person name="Ono Y."/>
            <person name="Takiguchi S."/>
            <person name="Watanabe S."/>
            <person name="Yosida M."/>
            <person name="Hotuta T."/>
            <person name="Kusano J."/>
            <person name="Kanehori K."/>
            <person name="Takahashi-Fujii A."/>
            <person name="Hara H."/>
            <person name="Tanase T.-O."/>
            <person name="Nomura Y."/>
            <person name="Togiya S."/>
            <person name="Komai F."/>
            <person name="Hara R."/>
            <person name="Takeuchi K."/>
            <person name="Arita M."/>
            <person name="Imose N."/>
            <person name="Musashino K."/>
            <person name="Yuuki H."/>
            <person name="Oshima A."/>
            <person name="Sasaki N."/>
            <person name="Aotsuka S."/>
            <person name="Yoshikawa Y."/>
            <person name="Matsunawa H."/>
            <person name="Ichihara T."/>
            <person name="Shiohata N."/>
            <person name="Sano S."/>
            <person name="Moriya S."/>
            <person name="Momiyama H."/>
            <person name="Satoh N."/>
            <person name="Takami S."/>
            <person name="Terashima Y."/>
            <person name="Suzuki O."/>
            <person name="Nakagawa S."/>
            <person name="Senoh A."/>
            <person name="Mizoguchi H."/>
            <person name="Goto Y."/>
            <person name="Shimizu F."/>
            <person name="Wakebe H."/>
            <person name="Hishigaki H."/>
            <person name="Watanabe T."/>
            <person name="Sugiyama A."/>
            <person name="Takemoto M."/>
            <person name="Kawakami B."/>
            <person name="Yamazaki M."/>
            <person name="Watanabe K."/>
            <person name="Kumagai A."/>
            <person name="Itakura S."/>
            <person name="Fukuzumi Y."/>
            <person name="Fujimori Y."/>
            <person name="Komiyama M."/>
            <person name="Tashiro H."/>
            <person name="Tanigami A."/>
            <person name="Fujiwara T."/>
            <person name="Ono T."/>
            <person name="Yamada K."/>
            <person name="Fujii Y."/>
            <person name="Ozaki K."/>
            <person name="Hirao M."/>
            <person name="Ohmori Y."/>
            <person name="Kawabata A."/>
            <person name="Hikiji T."/>
            <person name="Kobatake N."/>
            <person name="Inagaki H."/>
            <person name="Ikema Y."/>
            <person name="Okamoto S."/>
            <person name="Okitani R."/>
            <person name="Kawakami T."/>
            <person name="Noguchi S."/>
            <person name="Itoh T."/>
            <person name="Shigeta K."/>
            <person name="Senba T."/>
            <person name="Matsumura K."/>
            <person name="Nakajima Y."/>
            <person name="Mizuno T."/>
            <person name="Morinaga M."/>
            <person name="Sasaki M."/>
            <person name="Togashi T."/>
            <person name="Oyama M."/>
            <person name="Hata H."/>
            <person name="Watanabe M."/>
            <person name="Komatsu T."/>
            <person name="Mizushima-Sugano J."/>
            <person name="Satoh T."/>
            <person name="Shirai Y."/>
            <person name="Takahashi Y."/>
            <person name="Nakagawa K."/>
            <person name="Okumura K."/>
            <person name="Nagase T."/>
            <person name="Nomura N."/>
            <person name="Kikuchi H."/>
            <person name="Masuho Y."/>
            <person name="Yamashita R."/>
            <person name="Nakai K."/>
            <person name="Yada T."/>
            <person name="Nakamura Y."/>
            <person name="Ohara O."/>
            <person name="Isogai T."/>
            <person name="Sugano S."/>
        </authorList>
    </citation>
    <scope>NUCLEOTIDE SEQUENCE [LARGE SCALE MRNA]</scope>
    <source>
        <tissue>Placenta</tissue>
    </source>
</reference>
<reference key="5">
    <citation type="submission" date="2005-09" db="EMBL/GenBank/DDBJ databases">
        <authorList>
            <person name="Mural R.J."/>
            <person name="Istrail S."/>
            <person name="Sutton G.G."/>
            <person name="Florea L."/>
            <person name="Halpern A.L."/>
            <person name="Mobarry C.M."/>
            <person name="Lippert R."/>
            <person name="Walenz B."/>
            <person name="Shatkay H."/>
            <person name="Dew I."/>
            <person name="Miller J.R."/>
            <person name="Flanigan M.J."/>
            <person name="Edwards N.J."/>
            <person name="Bolanos R."/>
            <person name="Fasulo D."/>
            <person name="Halldorsson B.V."/>
            <person name="Hannenhalli S."/>
            <person name="Turner R."/>
            <person name="Yooseph S."/>
            <person name="Lu F."/>
            <person name="Nusskern D.R."/>
            <person name="Shue B.C."/>
            <person name="Zheng X.H."/>
            <person name="Zhong F."/>
            <person name="Delcher A.L."/>
            <person name="Huson D.H."/>
            <person name="Kravitz S.A."/>
            <person name="Mouchard L."/>
            <person name="Reinert K."/>
            <person name="Remington K.A."/>
            <person name="Clark A.G."/>
            <person name="Waterman M.S."/>
            <person name="Eichler E.E."/>
            <person name="Adams M.D."/>
            <person name="Hunkapiller M.W."/>
            <person name="Myers E.W."/>
            <person name="Venter J.C."/>
        </authorList>
    </citation>
    <scope>NUCLEOTIDE SEQUENCE [LARGE SCALE GENOMIC DNA]</scope>
</reference>
<reference key="6">
    <citation type="journal article" date="2004" name="Genome Res.">
        <title>The status, quality, and expansion of the NIH full-length cDNA project: the Mammalian Gene Collection (MGC).</title>
        <authorList>
            <consortium name="The MGC Project Team"/>
        </authorList>
    </citation>
    <scope>NUCLEOTIDE SEQUENCE [LARGE SCALE MRNA]</scope>
    <source>
        <tissue>Urinary bladder</tissue>
    </source>
</reference>
<reference key="7">
    <citation type="journal article" date="2010" name="Sci. Signal.">
        <title>Quantitative phosphoproteomics reveals widespread full phosphorylation site occupancy during mitosis.</title>
        <authorList>
            <person name="Olsen J.V."/>
            <person name="Vermeulen M."/>
            <person name="Santamaria A."/>
            <person name="Kumar C."/>
            <person name="Miller M.L."/>
            <person name="Jensen L.J."/>
            <person name="Gnad F."/>
            <person name="Cox J."/>
            <person name="Jensen T.S."/>
            <person name="Nigg E.A."/>
            <person name="Brunak S."/>
            <person name="Mann M."/>
        </authorList>
    </citation>
    <scope>PHOSPHORYLATION [LARGE SCALE ANALYSIS] AT SER-155</scope>
    <scope>IDENTIFICATION BY MASS SPECTROMETRY [LARGE SCALE ANALYSIS]</scope>
    <source>
        <tissue>Cervix carcinoma</tissue>
    </source>
</reference>
<reference key="8">
    <citation type="journal article" date="2011" name="BMC Syst. Biol.">
        <title>Initial characterization of the human central proteome.</title>
        <authorList>
            <person name="Burkard T.R."/>
            <person name="Planyavsky M."/>
            <person name="Kaupe I."/>
            <person name="Breitwieser F.P."/>
            <person name="Buerckstuemmer T."/>
            <person name="Bennett K.L."/>
            <person name="Superti-Furga G."/>
            <person name="Colinge J."/>
        </authorList>
    </citation>
    <scope>IDENTIFICATION BY MASS SPECTROMETRY [LARGE SCALE ANALYSIS]</scope>
</reference>
<reference key="9">
    <citation type="journal article" date="2011" name="J. Biol. Chem.">
        <title>COMMD1 (copper metabolism MURR1 domain-containing protein 1) regulates Cullin RING ligases by preventing CAND1 (Cullin-associated Nedd8-dissociated protein 1) binding.</title>
        <authorList>
            <person name="Mao X."/>
            <person name="Gluck N."/>
            <person name="Chen B."/>
            <person name="Starokadomskyy P."/>
            <person name="Li H."/>
            <person name="Maine G.N."/>
            <person name="Burstein E."/>
        </authorList>
    </citation>
    <scope>FUNCTION</scope>
    <scope>INTERACTION WITH CUL1; CUL2; CUL3; CUL4B AND CUL7</scope>
    <scope>SUBCELLULAR LOCATION</scope>
</reference>
<reference key="10">
    <citation type="journal article" date="2012" name="Proc. Natl. Acad. Sci. U.S.A.">
        <title>N-terminal acetylome analyses and functional insights of the N-terminal acetyltransferase NatB.</title>
        <authorList>
            <person name="Van Damme P."/>
            <person name="Lasa M."/>
            <person name="Polevoda B."/>
            <person name="Gazquez C."/>
            <person name="Elosegui-Artola A."/>
            <person name="Kim D.S."/>
            <person name="De Juan-Pardo E."/>
            <person name="Demeyer K."/>
            <person name="Hole K."/>
            <person name="Larrea E."/>
            <person name="Timmerman E."/>
            <person name="Prieto J."/>
            <person name="Arnesen T."/>
            <person name="Sherman F."/>
            <person name="Gevaert K."/>
            <person name="Aldabe R."/>
        </authorList>
    </citation>
    <scope>ACETYLATION [LARGE SCALE ANALYSIS] AT ALA-2</scope>
    <scope>CLEAVAGE OF INITIATOR METHIONINE [LARGE SCALE ANALYSIS]</scope>
    <scope>IDENTIFICATION BY MASS SPECTROMETRY [LARGE SCALE ANALYSIS]</scope>
</reference>
<reference key="11">
    <citation type="journal article" date="2013" name="Am. J. Physiol.">
        <title>Functional interaction of COMMD3 and COMMD9 with the epithelial sodium channel.</title>
        <authorList>
            <person name="Liu Y.F."/>
            <person name="Swart M."/>
            <person name="Ke Y."/>
            <person name="Ly K."/>
            <person name="McDonald F.J."/>
        </authorList>
    </citation>
    <scope>INTERACTION WITH SCNN1B</scope>
</reference>
<reference key="12">
    <citation type="journal article" date="2013" name="J. Clin. Invest.">
        <title>CCDC22 deficiency in humans blunts activation of proinflammatory NF-kappaB signaling.</title>
        <authorList>
            <person name="Starokadomskyy P."/>
            <person name="Gluck N."/>
            <person name="Li H."/>
            <person name="Chen B."/>
            <person name="Wallis M."/>
            <person name="Maine G.N."/>
            <person name="Mao X."/>
            <person name="Zaidi I.W."/>
            <person name="Hein M.Y."/>
            <person name="McDonald F.J."/>
            <person name="Lenzner S."/>
            <person name="Zecha A."/>
            <person name="Ropers H.H."/>
            <person name="Kuss A.W."/>
            <person name="McGaughran J."/>
            <person name="Gecz J."/>
            <person name="Burstein E."/>
        </authorList>
    </citation>
    <scope>INTERACTION WITH CCDC22</scope>
</reference>
<reference key="13">
    <citation type="journal article" date="2013" name="J. Proteome Res.">
        <title>Toward a comprehensive characterization of a human cancer cell phosphoproteome.</title>
        <authorList>
            <person name="Zhou H."/>
            <person name="Di Palma S."/>
            <person name="Preisinger C."/>
            <person name="Peng M."/>
            <person name="Polat A.N."/>
            <person name="Heck A.J."/>
            <person name="Mohammed S."/>
        </authorList>
    </citation>
    <scope>PHOSPHORYLATION [LARGE SCALE ANALYSIS] AT SER-155</scope>
    <scope>IDENTIFICATION BY MASS SPECTROMETRY [LARGE SCALE ANALYSIS]</scope>
    <source>
        <tissue>Erythroleukemia</tissue>
    </source>
</reference>
<reference key="14">
    <citation type="journal article" date="2015" name="Mol. Biol. Cell">
        <title>COMMD1 is linked to the WASH complex and regulates endosomal trafficking of the copper transporter ATP7A.</title>
        <authorList>
            <person name="Phillips-Krawczak C.A."/>
            <person name="Singla A."/>
            <person name="Starokadomskyy P."/>
            <person name="Deng Z."/>
            <person name="Osborne D.G."/>
            <person name="Li H."/>
            <person name="Dick C.J."/>
            <person name="Gomez T.S."/>
            <person name="Koenecke M."/>
            <person name="Zhang J.S."/>
            <person name="Dai H."/>
            <person name="Sifuentes-Dominguez L.F."/>
            <person name="Geng L.N."/>
            <person name="Kaufmann S.H."/>
            <person name="Hein M.Y."/>
            <person name="Wallis M."/>
            <person name="McGaughran J."/>
            <person name="Gecz J."/>
            <person name="van de Sluis B."/>
            <person name="Billadeau D.D."/>
            <person name="Burstein E."/>
        </authorList>
    </citation>
    <scope>INTERACTION WITH CCDC93</scope>
</reference>
<reference key="15">
    <citation type="journal article" date="2015" name="Proteomics">
        <title>N-terminome analysis of the human mitochondrial proteome.</title>
        <authorList>
            <person name="Vaca Jacome A.S."/>
            <person name="Rabilloud T."/>
            <person name="Schaeffer-Reiss C."/>
            <person name="Rompais M."/>
            <person name="Ayoub D."/>
            <person name="Lane L."/>
            <person name="Bairoch A."/>
            <person name="Van Dorsselaer A."/>
            <person name="Carapito C."/>
        </authorList>
    </citation>
    <scope>ACETYLATION [LARGE SCALE ANALYSIS] AT ALA-2</scope>
    <scope>CLEAVAGE OF INITIATOR METHIONINE [LARGE SCALE ANALYSIS]</scope>
    <scope>IDENTIFICATION BY MASS SPECTROMETRY [LARGE SCALE ANALYSIS]</scope>
</reference>
<reference evidence="11 12 13" key="16">
    <citation type="journal article" date="2023" name="Cell">
        <title>Structure of the endosomal commander complex linked to Ritscher-Schinzel syndrome.</title>
        <authorList>
            <person name="Healy M.D."/>
            <person name="McNally K.E."/>
            <person name="Butkovic R."/>
            <person name="Chilton M."/>
            <person name="Kato K."/>
            <person name="Sacharz J."/>
            <person name="McConville C."/>
            <person name="Moody E.R.R."/>
            <person name="Shaw S."/>
            <person name="Planelles-Herrero V.J."/>
            <person name="Yadav S.K.N."/>
            <person name="Ross J."/>
            <person name="Borucu U."/>
            <person name="Palmer C.S."/>
            <person name="Chen K.E."/>
            <person name="Croll T.I."/>
            <person name="Hall R.J."/>
            <person name="Caruana N.J."/>
            <person name="Ghai R."/>
            <person name="Nguyen T.H.D."/>
            <person name="Heesom K.J."/>
            <person name="Saitoh S."/>
            <person name="Berger I."/>
            <person name="Schaffitzel C."/>
            <person name="Williams T.A."/>
            <person name="Stroud D.A."/>
            <person name="Derivery E."/>
            <person name="Collins B.M."/>
            <person name="Cullen P.J."/>
        </authorList>
    </citation>
    <scope>STRUCTURE BY ELECTRON MICROSCOPY (3.12 ANGSTROMS) OF 5-202 OF THE CCC COMPLEX</scope>
    <scope>FUNCTION</scope>
    <scope>SUBUNIT</scope>
</reference>
<reference evidence="14" key="17">
    <citation type="journal article" date="2024" name="Nat. Struct. Mol. Biol.">
        <title>Structure and interactions of the endogenous human commander complex.</title>
        <authorList>
            <person name="Laulumaa S."/>
            <person name="Kumpula E.P."/>
            <person name="Huiskonen J.T."/>
            <person name="Varjosalo M."/>
        </authorList>
    </citation>
    <scope>STRUCTURE BY ELECTRON MICROSCOPY (2.90 ANGSTROMS) OF THE CCC COMPLEX</scope>
    <scope>FUNCTION</scope>
    <scope>SUBUNIT</scope>
</reference>
<name>COMDA_HUMAN</name>
<feature type="initiator methionine" description="Removed" evidence="16 18">
    <location>
        <position position="1"/>
    </location>
</feature>
<feature type="chain" id="PRO_0000077405" description="COMM domain-containing protein 10">
    <location>
        <begin position="2"/>
        <end position="202"/>
    </location>
</feature>
<feature type="domain" description="COMM" evidence="1">
    <location>
        <begin position="133"/>
        <end position="202"/>
    </location>
</feature>
<feature type="modified residue" description="N-acetylalanine" evidence="16 18">
    <location>
        <position position="2"/>
    </location>
</feature>
<feature type="modified residue" description="Phosphoserine" evidence="15 17">
    <location>
        <position position="155"/>
    </location>
</feature>
<feature type="sequence variant" id="VAR_061122" description="In dbSNP:rs1129495.">
    <original>I</original>
    <variation>S</variation>
    <location>
        <position position="128"/>
    </location>
</feature>
<feature type="helix" evidence="19">
    <location>
        <begin position="13"/>
        <end position="24"/>
    </location>
</feature>
<feature type="turn" evidence="19">
    <location>
        <begin position="27"/>
        <end position="29"/>
    </location>
</feature>
<feature type="helix" evidence="19">
    <location>
        <begin position="30"/>
        <end position="40"/>
    </location>
</feature>
<feature type="strand" evidence="19">
    <location>
        <begin position="44"/>
        <end position="46"/>
    </location>
</feature>
<feature type="helix" evidence="19">
    <location>
        <begin position="51"/>
        <end position="61"/>
    </location>
</feature>
<feature type="helix" evidence="19">
    <location>
        <begin position="65"/>
        <end position="85"/>
    </location>
</feature>
<feature type="helix" evidence="19">
    <location>
        <begin position="89"/>
        <end position="98"/>
    </location>
</feature>
<feature type="helix" evidence="19">
    <location>
        <begin position="103"/>
        <end position="125"/>
    </location>
</feature>
<feature type="strand" evidence="19">
    <location>
        <begin position="130"/>
        <end position="147"/>
    </location>
</feature>
<feature type="strand" evidence="19">
    <location>
        <begin position="155"/>
        <end position="166"/>
    </location>
</feature>
<feature type="turn" evidence="19">
    <location>
        <begin position="167"/>
        <end position="170"/>
    </location>
</feature>
<feature type="strand" evidence="19">
    <location>
        <begin position="171"/>
        <end position="179"/>
    </location>
</feature>
<feature type="helix" evidence="19">
    <location>
        <begin position="181"/>
        <end position="199"/>
    </location>
</feature>
<organism>
    <name type="scientific">Homo sapiens</name>
    <name type="common">Human</name>
    <dbReference type="NCBI Taxonomy" id="9606"/>
    <lineage>
        <taxon>Eukaryota</taxon>
        <taxon>Metazoa</taxon>
        <taxon>Chordata</taxon>
        <taxon>Craniata</taxon>
        <taxon>Vertebrata</taxon>
        <taxon>Euteleostomi</taxon>
        <taxon>Mammalia</taxon>
        <taxon>Eutheria</taxon>
        <taxon>Euarchontoglires</taxon>
        <taxon>Primates</taxon>
        <taxon>Haplorrhini</taxon>
        <taxon>Catarrhini</taxon>
        <taxon>Hominidae</taxon>
        <taxon>Homo</taxon>
    </lineage>
</organism>
<gene>
    <name type="primary">COMMD10</name>
    <name type="ORF">HSPC305</name>
    <name type="ORF">PTD002</name>
</gene>
<protein>
    <recommendedName>
        <fullName>COMM domain-containing protein 10</fullName>
    </recommendedName>
</protein>
<keyword id="KW-0002">3D-structure</keyword>
<keyword id="KW-0007">Acetylation</keyword>
<keyword id="KW-0963">Cytoplasm</keyword>
<keyword id="KW-0539">Nucleus</keyword>
<keyword id="KW-0597">Phosphoprotein</keyword>
<keyword id="KW-1267">Proteomics identification</keyword>
<keyword id="KW-1185">Reference proteome</keyword>
<keyword id="KW-0804">Transcription</keyword>
<keyword id="KW-0805">Transcription regulation</keyword>
<keyword id="KW-0833">Ubl conjugation pathway</keyword>
<proteinExistence type="evidence at protein level"/>
<sequence>MAVPAALILRESPSMKKAVSLINAIDTGRFPRLLTRILQKLHLKAESSFSEEEEEKLQAAFSLEKQDLHLVLETISFILEQAVYHNVKPAALQQQLENIHLRQDKAEAFVNTWSSMGQETVEKFRQRILAPCKLETVGWQLNLQMAHSAQAKLKSPQAVLQLGVNNEDSKSLEKVLVEFSHKELFDFYNKLETIQAQLDSLT</sequence>